<proteinExistence type="inferred from homology"/>
<organism>
    <name type="scientific">Salmonella paratyphi A (strain ATCC 9150 / SARB42)</name>
    <dbReference type="NCBI Taxonomy" id="295319"/>
    <lineage>
        <taxon>Bacteria</taxon>
        <taxon>Pseudomonadati</taxon>
        <taxon>Pseudomonadota</taxon>
        <taxon>Gammaproteobacteria</taxon>
        <taxon>Enterobacterales</taxon>
        <taxon>Enterobacteriaceae</taxon>
        <taxon>Salmonella</taxon>
    </lineage>
</organism>
<comment type="similarity">
    <text evidence="1">Belongs to the bacterial ribosomal protein bL36 family.</text>
</comment>
<sequence length="38" mass="4364">MKVRASVKKLCRNCKIVKRDGVIRVICSAEPKHKQRQG</sequence>
<name>RL361_SALPA</name>
<reference key="1">
    <citation type="journal article" date="2004" name="Nat. Genet.">
        <title>Comparison of genome degradation in Paratyphi A and Typhi, human-restricted serovars of Salmonella enterica that cause typhoid.</title>
        <authorList>
            <person name="McClelland M."/>
            <person name="Sanderson K.E."/>
            <person name="Clifton S.W."/>
            <person name="Latreille P."/>
            <person name="Porwollik S."/>
            <person name="Sabo A."/>
            <person name="Meyer R."/>
            <person name="Bieri T."/>
            <person name="Ozersky P."/>
            <person name="McLellan M."/>
            <person name="Harkins C.R."/>
            <person name="Wang C."/>
            <person name="Nguyen C."/>
            <person name="Berghoff A."/>
            <person name="Elliott G."/>
            <person name="Kohlberg S."/>
            <person name="Strong C."/>
            <person name="Du F."/>
            <person name="Carter J."/>
            <person name="Kremizki C."/>
            <person name="Layman D."/>
            <person name="Leonard S."/>
            <person name="Sun H."/>
            <person name="Fulton L."/>
            <person name="Nash W."/>
            <person name="Miner T."/>
            <person name="Minx P."/>
            <person name="Delehaunty K."/>
            <person name="Fronick C."/>
            <person name="Magrini V."/>
            <person name="Nhan M."/>
            <person name="Warren W."/>
            <person name="Florea L."/>
            <person name="Spieth J."/>
            <person name="Wilson R.K."/>
        </authorList>
    </citation>
    <scope>NUCLEOTIDE SEQUENCE [LARGE SCALE GENOMIC DNA]</scope>
    <source>
        <strain>ATCC 9150 / SARB42</strain>
    </source>
</reference>
<evidence type="ECO:0000255" key="1">
    <source>
        <dbReference type="HAMAP-Rule" id="MF_00251"/>
    </source>
</evidence>
<evidence type="ECO:0000305" key="2"/>
<feature type="chain" id="PRO_0000344717" description="Large ribosomal subunit protein bL36A">
    <location>
        <begin position="1"/>
        <end position="38"/>
    </location>
</feature>
<protein>
    <recommendedName>
        <fullName evidence="1">Large ribosomal subunit protein bL36A</fullName>
    </recommendedName>
    <alternativeName>
        <fullName evidence="2">50S ribosomal protein L36 1</fullName>
    </alternativeName>
</protein>
<accession>Q5PK05</accession>
<keyword id="KW-0687">Ribonucleoprotein</keyword>
<keyword id="KW-0689">Ribosomal protein</keyword>
<gene>
    <name evidence="1" type="primary">rpmJ1</name>
    <name type="ordered locus">SPA3285</name>
</gene>
<dbReference type="EMBL" id="CP000026">
    <property type="protein sequence ID" value="AAV79101.1"/>
    <property type="molecule type" value="Genomic_DNA"/>
</dbReference>
<dbReference type="SMR" id="Q5PK05"/>
<dbReference type="KEGG" id="spt:SPA3285"/>
<dbReference type="HOGENOM" id="CLU_135723_6_2_6"/>
<dbReference type="Proteomes" id="UP000008185">
    <property type="component" value="Chromosome"/>
</dbReference>
<dbReference type="GO" id="GO:0005737">
    <property type="term" value="C:cytoplasm"/>
    <property type="evidence" value="ECO:0007669"/>
    <property type="project" value="UniProtKB-ARBA"/>
</dbReference>
<dbReference type="GO" id="GO:1990904">
    <property type="term" value="C:ribonucleoprotein complex"/>
    <property type="evidence" value="ECO:0007669"/>
    <property type="project" value="UniProtKB-KW"/>
</dbReference>
<dbReference type="GO" id="GO:0005840">
    <property type="term" value="C:ribosome"/>
    <property type="evidence" value="ECO:0007669"/>
    <property type="project" value="UniProtKB-KW"/>
</dbReference>
<dbReference type="GO" id="GO:0003735">
    <property type="term" value="F:structural constituent of ribosome"/>
    <property type="evidence" value="ECO:0007669"/>
    <property type="project" value="InterPro"/>
</dbReference>
<dbReference type="GO" id="GO:0006412">
    <property type="term" value="P:translation"/>
    <property type="evidence" value="ECO:0007669"/>
    <property type="project" value="UniProtKB-UniRule"/>
</dbReference>
<dbReference type="HAMAP" id="MF_00251">
    <property type="entry name" value="Ribosomal_bL36"/>
    <property type="match status" value="1"/>
</dbReference>
<dbReference type="InterPro" id="IPR000473">
    <property type="entry name" value="Ribosomal_bL36"/>
</dbReference>
<dbReference type="InterPro" id="IPR035977">
    <property type="entry name" value="Ribosomal_bL36_sp"/>
</dbReference>
<dbReference type="NCBIfam" id="TIGR01022">
    <property type="entry name" value="rpmJ_bact"/>
    <property type="match status" value="1"/>
</dbReference>
<dbReference type="PANTHER" id="PTHR42888">
    <property type="entry name" value="50S RIBOSOMAL PROTEIN L36, CHLOROPLASTIC"/>
    <property type="match status" value="1"/>
</dbReference>
<dbReference type="PANTHER" id="PTHR42888:SF1">
    <property type="entry name" value="LARGE RIBOSOMAL SUBUNIT PROTEIN BL36C"/>
    <property type="match status" value="1"/>
</dbReference>
<dbReference type="Pfam" id="PF00444">
    <property type="entry name" value="Ribosomal_L36"/>
    <property type="match status" value="1"/>
</dbReference>
<dbReference type="SUPFAM" id="SSF57840">
    <property type="entry name" value="Ribosomal protein L36"/>
    <property type="match status" value="1"/>
</dbReference>
<dbReference type="PROSITE" id="PS00828">
    <property type="entry name" value="RIBOSOMAL_L36"/>
    <property type="match status" value="1"/>
</dbReference>